<sequence>MAAALRSNTSRETASLTLSHFRYFIFNRIHTARTATSPPHCNHRSKSDEKFPYKISSLGTSFLDNRGGGERRNSTKCYAAQKKLSGVGSSVVILSSQGDPPDLWQPPGDGVSVRVNGSSVNLGRGGGGGGSSPGGPGNGTGSNSKEDCWGGSNLGSDFPTPKEICKGLNKFVIGQERAKKVLSVAVYNHYKRIYHESSQKRSAGETDSTAAKPADDDMVELEKSNILLMGPTGSGKTLLAKTLARFVNVPFVIADATTLTQAGYVGEDVESILYKLLTVADYNVAAAQQGIVYIDEVDKITKKAESLNISRDVSGEGVQQALLKMLEGTIVNVPEKGARKHPRGDNIQIDTKDILFICGGAFVDIEKTISERRHDSSIGFGAPVRANMRAGGVTNAAVASNLMETVESSDLIAYGLIPEFVGRFPVLVSLSALTENQLMQVLTEPKNALGKQYKKMYQMNSVKLHFTESALRLIARKAITKNTGARGLRALLESILMDSMYEIPDEGTGSDMIEAVVVDEEAVEGEGRRGSGAKILRGKGALARYLSETNSKDSPQTTKEGSDGETEVEAEIPSVVASM</sequence>
<reference key="1">
    <citation type="journal article" date="2001" name="Plant Mol. Biol.">
        <title>Plant mitochondria contain proteolytic and regulatory subunits of the ATP-dependent Clp protease.</title>
        <authorList>
            <person name="Halperin T."/>
            <person name="Zheng B."/>
            <person name="Itzhaki H."/>
            <person name="Clarke A.K."/>
            <person name="Adam Z."/>
        </authorList>
    </citation>
    <scope>NUCLEOTIDE SEQUENCE [MRNA]</scope>
    <scope>SUBCELLULAR LOCATION</scope>
    <scope>TISSUE SPECIFICITY</scope>
    <scope>FUNCTION</scope>
</reference>
<reference key="2">
    <citation type="journal article" date="1998" name="DNA Res.">
        <title>Structural analysis of Arabidopsis thaliana chromosome 5. VI. Sequence features of the regions of 1,367,185 bp covered by 19 physically assigned P1 and TAC clones.</title>
        <authorList>
            <person name="Kotani H."/>
            <person name="Nakamura Y."/>
            <person name="Sato S."/>
            <person name="Asamizu E."/>
            <person name="Kaneko T."/>
            <person name="Miyajima N."/>
            <person name="Tabata S."/>
        </authorList>
    </citation>
    <scope>NUCLEOTIDE SEQUENCE [LARGE SCALE GENOMIC DNA]</scope>
    <source>
        <strain>cv. Columbia</strain>
    </source>
</reference>
<reference key="3">
    <citation type="journal article" date="2017" name="Plant J.">
        <title>Araport11: a complete reannotation of the Arabidopsis thaliana reference genome.</title>
        <authorList>
            <person name="Cheng C.Y."/>
            <person name="Krishnakumar V."/>
            <person name="Chan A.P."/>
            <person name="Thibaud-Nissen F."/>
            <person name="Schobel S."/>
            <person name="Town C.D."/>
        </authorList>
    </citation>
    <scope>GENOME REANNOTATION</scope>
    <source>
        <strain>cv. Columbia</strain>
    </source>
</reference>
<reference key="4">
    <citation type="journal article" date="2003" name="Science">
        <title>Empirical analysis of transcriptional activity in the Arabidopsis genome.</title>
        <authorList>
            <person name="Yamada K."/>
            <person name="Lim J."/>
            <person name="Dale J.M."/>
            <person name="Chen H."/>
            <person name="Shinn P."/>
            <person name="Palm C.J."/>
            <person name="Southwick A.M."/>
            <person name="Wu H.C."/>
            <person name="Kim C.J."/>
            <person name="Nguyen M."/>
            <person name="Pham P.K."/>
            <person name="Cheuk R.F."/>
            <person name="Karlin-Newmann G."/>
            <person name="Liu S.X."/>
            <person name="Lam B."/>
            <person name="Sakano H."/>
            <person name="Wu T."/>
            <person name="Yu G."/>
            <person name="Miranda M."/>
            <person name="Quach H.L."/>
            <person name="Tripp M."/>
            <person name="Chang C.H."/>
            <person name="Lee J.M."/>
            <person name="Toriumi M.J."/>
            <person name="Chan M.M."/>
            <person name="Tang C.C."/>
            <person name="Onodera C.S."/>
            <person name="Deng J.M."/>
            <person name="Akiyama K."/>
            <person name="Ansari Y."/>
            <person name="Arakawa T."/>
            <person name="Banh J."/>
            <person name="Banno F."/>
            <person name="Bowser L."/>
            <person name="Brooks S.Y."/>
            <person name="Carninci P."/>
            <person name="Chao Q."/>
            <person name="Choy N."/>
            <person name="Enju A."/>
            <person name="Goldsmith A.D."/>
            <person name="Gurjal M."/>
            <person name="Hansen N.F."/>
            <person name="Hayashizaki Y."/>
            <person name="Johnson-Hopson C."/>
            <person name="Hsuan V.W."/>
            <person name="Iida K."/>
            <person name="Karnes M."/>
            <person name="Khan S."/>
            <person name="Koesema E."/>
            <person name="Ishida J."/>
            <person name="Jiang P.X."/>
            <person name="Jones T."/>
            <person name="Kawai J."/>
            <person name="Kamiya A."/>
            <person name="Meyers C."/>
            <person name="Nakajima M."/>
            <person name="Narusaka M."/>
            <person name="Seki M."/>
            <person name="Sakurai T."/>
            <person name="Satou M."/>
            <person name="Tamse R."/>
            <person name="Vaysberg M."/>
            <person name="Wallender E.K."/>
            <person name="Wong C."/>
            <person name="Yamamura Y."/>
            <person name="Yuan S."/>
            <person name="Shinozaki K."/>
            <person name="Davis R.W."/>
            <person name="Theologis A."/>
            <person name="Ecker J.R."/>
        </authorList>
    </citation>
    <scope>NUCLEOTIDE SEQUENCE [LARGE SCALE MRNA]</scope>
    <source>
        <strain>cv. Columbia</strain>
    </source>
</reference>
<reference key="5">
    <citation type="journal article" date="2001" name="Plant Physiol.">
        <title>Chloroplast and mitochondrial proteases in Arabidopsis. A proposed nomenclature.</title>
        <authorList>
            <person name="Adam Z."/>
            <person name="Adamska I."/>
            <person name="Nakabayashi K."/>
            <person name="Ostersetzer O."/>
            <person name="Haussuhl K."/>
            <person name="Manuell A."/>
            <person name="Zheng B."/>
            <person name="Vallon O."/>
            <person name="Rodermel S.R."/>
            <person name="Shinozaki K."/>
            <person name="Clarke A.K."/>
        </authorList>
    </citation>
    <scope>GENE FAMILY</scope>
    <scope>NOMENCLATURE</scope>
</reference>
<reference key="6">
    <citation type="journal article" date="2005" name="Physiol. Plantarum">
        <title>The ATP-dependent Clp protease in chloroplasts of higher plants.</title>
        <authorList>
            <person name="Clarke A.K."/>
            <person name="MacDonald T.M."/>
            <person name="Sjoegren L.L."/>
        </authorList>
    </citation>
    <scope>NOMENCLATURE</scope>
</reference>
<comment type="function">
    <text evidence="1 4">ATP-dependent specificity component of the mitochondrial Clp protease (PubMed:11352464). It directs the protease to specific substrates (By similarity). Can perform chaperone functions in the absence of ClpP (By similarity).</text>
</comment>
<comment type="subcellular location">
    <subcellularLocation>
        <location evidence="4">Mitochondrion</location>
    </subcellularLocation>
</comment>
<comment type="tissue specificity">
    <text evidence="4">Constitutively expressed in leaves, shoots, roots and flowers.</text>
</comment>
<comment type="similarity">
    <text evidence="6">Belongs to the ClpX chaperone family.</text>
</comment>
<feature type="transit peptide" description="Mitochondrion" evidence="2">
    <location>
        <begin position="1"/>
        <end position="46"/>
    </location>
</feature>
<feature type="chain" id="PRO_0000434548" description="CLP protease regulatory subunit CLPX1, mitochondrial">
    <location>
        <begin position="47"/>
        <end position="579"/>
    </location>
</feature>
<feature type="region of interest" description="Disordered" evidence="3">
    <location>
        <begin position="99"/>
        <end position="153"/>
    </location>
</feature>
<feature type="region of interest" description="Disordered" evidence="3">
    <location>
        <begin position="197"/>
        <end position="216"/>
    </location>
</feature>
<feature type="region of interest" description="Disordered" evidence="3">
    <location>
        <begin position="546"/>
        <end position="579"/>
    </location>
</feature>
<feature type="compositionally biased region" description="Low complexity" evidence="3">
    <location>
        <begin position="108"/>
        <end position="122"/>
    </location>
</feature>
<feature type="compositionally biased region" description="Gly residues" evidence="3">
    <location>
        <begin position="123"/>
        <end position="140"/>
    </location>
</feature>
<feature type="compositionally biased region" description="Polar residues" evidence="3">
    <location>
        <begin position="547"/>
        <end position="559"/>
    </location>
</feature>
<feature type="binding site" evidence="1">
    <location>
        <begin position="231"/>
        <end position="238"/>
    </location>
    <ligand>
        <name>ATP</name>
        <dbReference type="ChEBI" id="CHEBI:30616"/>
    </ligand>
</feature>
<feature type="sequence conflict" description="In Ref. 1; AAB88706." evidence="6" ref="1">
    <original>S</original>
    <variation>N</variation>
    <location>
        <position position="132"/>
    </location>
</feature>
<feature type="sequence conflict" description="In Ref. 1; AAB88706." evidence="6" ref="1">
    <original>N</original>
    <variation>Y</variation>
    <location>
        <position position="308"/>
    </location>
</feature>
<feature type="sequence conflict" description="In Ref. 1; AAB88706." evidence="6" ref="1">
    <original>N</original>
    <variation>T</variation>
    <location>
        <position position="395"/>
    </location>
</feature>
<feature type="sequence conflict" description="In Ref. 1; AAB88706." evidence="6" ref="1">
    <original>S</original>
    <variation>T</variation>
    <location>
        <position position="408"/>
    </location>
</feature>
<dbReference type="EMBL" id="AF036328">
    <property type="protein sequence ID" value="AAB88706.1"/>
    <property type="molecule type" value="mRNA"/>
</dbReference>
<dbReference type="EMBL" id="AB013388">
    <property type="protein sequence ID" value="BAB09797.1"/>
    <property type="molecule type" value="Genomic_DNA"/>
</dbReference>
<dbReference type="EMBL" id="CP002688">
    <property type="protein sequence ID" value="AED96343.1"/>
    <property type="molecule type" value="Genomic_DNA"/>
</dbReference>
<dbReference type="EMBL" id="AY035103">
    <property type="protein sequence ID" value="AAK59608.1"/>
    <property type="molecule type" value="mRNA"/>
</dbReference>
<dbReference type="EMBL" id="AY142561">
    <property type="protein sequence ID" value="AAN13130.1"/>
    <property type="molecule type" value="mRNA"/>
</dbReference>
<dbReference type="SMR" id="Q9FK07"/>
<dbReference type="FunCoup" id="Q9FK07">
    <property type="interactions" value="3480"/>
</dbReference>
<dbReference type="STRING" id="3702.Q9FK07"/>
<dbReference type="iPTMnet" id="Q9FK07"/>
<dbReference type="PaxDb" id="3702-AT5G53350.1"/>
<dbReference type="ProteomicsDB" id="222097"/>
<dbReference type="EnsemblPlants" id="AT5G53350.1">
    <property type="protein sequence ID" value="AT5G53350.1"/>
    <property type="gene ID" value="AT5G53350"/>
</dbReference>
<dbReference type="GeneID" id="835416"/>
<dbReference type="Gramene" id="AT5G53350.1">
    <property type="protein sequence ID" value="AT5G53350.1"/>
    <property type="gene ID" value="AT5G53350"/>
</dbReference>
<dbReference type="KEGG" id="ath:AT5G53350"/>
<dbReference type="Araport" id="AT5G53350"/>
<dbReference type="TAIR" id="AT5G53350">
    <property type="gene designation" value="CLPX"/>
</dbReference>
<dbReference type="eggNOG" id="KOG0745">
    <property type="taxonomic scope" value="Eukaryota"/>
</dbReference>
<dbReference type="HOGENOM" id="CLU_014218_6_1_1"/>
<dbReference type="InParanoid" id="Q9FK07"/>
<dbReference type="OMA" id="ASPHCNH"/>
<dbReference type="OrthoDB" id="1721884at2759"/>
<dbReference type="PhylomeDB" id="Q9FK07"/>
<dbReference type="PRO" id="PR:Q9FK07"/>
<dbReference type="Proteomes" id="UP000006548">
    <property type="component" value="Chromosome 5"/>
</dbReference>
<dbReference type="ExpressionAtlas" id="Q9FK07">
    <property type="expression patterns" value="baseline and differential"/>
</dbReference>
<dbReference type="GO" id="GO:0005739">
    <property type="term" value="C:mitochondrion"/>
    <property type="evidence" value="ECO:0000314"/>
    <property type="project" value="TAIR"/>
</dbReference>
<dbReference type="GO" id="GO:0005524">
    <property type="term" value="F:ATP binding"/>
    <property type="evidence" value="ECO:0007669"/>
    <property type="project" value="UniProtKB-KW"/>
</dbReference>
<dbReference type="GO" id="GO:0016887">
    <property type="term" value="F:ATP hydrolysis activity"/>
    <property type="evidence" value="ECO:0007669"/>
    <property type="project" value="InterPro"/>
</dbReference>
<dbReference type="GO" id="GO:0140662">
    <property type="term" value="F:ATP-dependent protein folding chaperone"/>
    <property type="evidence" value="ECO:0007669"/>
    <property type="project" value="InterPro"/>
</dbReference>
<dbReference type="GO" id="GO:0008233">
    <property type="term" value="F:peptidase activity"/>
    <property type="evidence" value="ECO:0007669"/>
    <property type="project" value="UniProtKB-KW"/>
</dbReference>
<dbReference type="GO" id="GO:0051082">
    <property type="term" value="F:unfolded protein binding"/>
    <property type="evidence" value="ECO:0007669"/>
    <property type="project" value="InterPro"/>
</dbReference>
<dbReference type="GO" id="GO:0006508">
    <property type="term" value="P:proteolysis"/>
    <property type="evidence" value="ECO:0007669"/>
    <property type="project" value="UniProtKB-KW"/>
</dbReference>
<dbReference type="CDD" id="cd19497">
    <property type="entry name" value="RecA-like_ClpX"/>
    <property type="match status" value="1"/>
</dbReference>
<dbReference type="FunFam" id="1.10.8.60:FF:000002">
    <property type="entry name" value="ATP-dependent Clp protease ATP-binding subunit ClpX"/>
    <property type="match status" value="1"/>
</dbReference>
<dbReference type="FunFam" id="3.40.50.300:FF:000560">
    <property type="entry name" value="CLP protease regulatory subunit CLPX3 mitochondrial"/>
    <property type="match status" value="1"/>
</dbReference>
<dbReference type="Gene3D" id="1.10.8.60">
    <property type="match status" value="1"/>
</dbReference>
<dbReference type="Gene3D" id="3.40.50.300">
    <property type="entry name" value="P-loop containing nucleotide triphosphate hydrolases"/>
    <property type="match status" value="1"/>
</dbReference>
<dbReference type="InterPro" id="IPR003593">
    <property type="entry name" value="AAA+_ATPase"/>
</dbReference>
<dbReference type="InterPro" id="IPR050052">
    <property type="entry name" value="ATP-dep_Clp_protease_ClpX"/>
</dbReference>
<dbReference type="InterPro" id="IPR003959">
    <property type="entry name" value="ATPase_AAA_core"/>
</dbReference>
<dbReference type="InterPro" id="IPR019489">
    <property type="entry name" value="Clp_ATPase_C"/>
</dbReference>
<dbReference type="InterPro" id="IPR004487">
    <property type="entry name" value="Clp_protease_ATP-bd_su_ClpX"/>
</dbReference>
<dbReference type="InterPro" id="IPR027417">
    <property type="entry name" value="P-loop_NTPase"/>
</dbReference>
<dbReference type="NCBIfam" id="TIGR00382">
    <property type="entry name" value="clpX"/>
    <property type="match status" value="1"/>
</dbReference>
<dbReference type="NCBIfam" id="NF003745">
    <property type="entry name" value="PRK05342.1"/>
    <property type="match status" value="1"/>
</dbReference>
<dbReference type="PANTHER" id="PTHR48102">
    <property type="entry name" value="ATP-DEPENDENT CLP PROTEASE ATP-BINDING SUBUNIT CLPX-LIKE, MITOCHONDRIAL-RELATED"/>
    <property type="match status" value="1"/>
</dbReference>
<dbReference type="PANTHER" id="PTHR48102:SF6">
    <property type="entry name" value="CLP PROTEASE REGULATORY SUBUNIT CLPX1, MITOCHONDRIAL"/>
    <property type="match status" value="1"/>
</dbReference>
<dbReference type="Pfam" id="PF07724">
    <property type="entry name" value="AAA_2"/>
    <property type="match status" value="1"/>
</dbReference>
<dbReference type="Pfam" id="PF10431">
    <property type="entry name" value="ClpB_D2-small"/>
    <property type="match status" value="1"/>
</dbReference>
<dbReference type="SMART" id="SM00382">
    <property type="entry name" value="AAA"/>
    <property type="match status" value="1"/>
</dbReference>
<dbReference type="SMART" id="SM01086">
    <property type="entry name" value="ClpB_D2-small"/>
    <property type="match status" value="1"/>
</dbReference>
<dbReference type="SUPFAM" id="SSF52540">
    <property type="entry name" value="P-loop containing nucleoside triphosphate hydrolases"/>
    <property type="match status" value="1"/>
</dbReference>
<protein>
    <recommendedName>
        <fullName evidence="5">CLP protease regulatory subunit CLPX1, mitochondrial</fullName>
    </recommendedName>
</protein>
<name>CLPX1_ARATH</name>
<proteinExistence type="evidence at transcript level"/>
<gene>
    <name evidence="5" type="primary">CLPX1</name>
    <name evidence="7" type="ordered locus">At5g53350</name>
    <name evidence="8" type="ORF">K19E1.15</name>
</gene>
<organism evidence="9">
    <name type="scientific">Arabidopsis thaliana</name>
    <name type="common">Mouse-ear cress</name>
    <dbReference type="NCBI Taxonomy" id="3702"/>
    <lineage>
        <taxon>Eukaryota</taxon>
        <taxon>Viridiplantae</taxon>
        <taxon>Streptophyta</taxon>
        <taxon>Embryophyta</taxon>
        <taxon>Tracheophyta</taxon>
        <taxon>Spermatophyta</taxon>
        <taxon>Magnoliopsida</taxon>
        <taxon>eudicotyledons</taxon>
        <taxon>Gunneridae</taxon>
        <taxon>Pentapetalae</taxon>
        <taxon>rosids</taxon>
        <taxon>malvids</taxon>
        <taxon>Brassicales</taxon>
        <taxon>Brassicaceae</taxon>
        <taxon>Camelineae</taxon>
        <taxon>Arabidopsis</taxon>
    </lineage>
</organism>
<evidence type="ECO:0000250" key="1">
    <source>
        <dbReference type="UniProtKB" id="B1J693"/>
    </source>
</evidence>
<evidence type="ECO:0000255" key="2"/>
<evidence type="ECO:0000256" key="3">
    <source>
        <dbReference type="SAM" id="MobiDB-lite"/>
    </source>
</evidence>
<evidence type="ECO:0000269" key="4">
    <source>
    </source>
</evidence>
<evidence type="ECO:0000303" key="5">
    <source>
    </source>
</evidence>
<evidence type="ECO:0000305" key="6"/>
<evidence type="ECO:0000312" key="7">
    <source>
        <dbReference type="Araport" id="AT5G53350"/>
    </source>
</evidence>
<evidence type="ECO:0000312" key="8">
    <source>
        <dbReference type="EMBL" id="BAB09797.1"/>
    </source>
</evidence>
<evidence type="ECO:0000312" key="9">
    <source>
        <dbReference type="Proteomes" id="UP000006548"/>
    </source>
</evidence>
<keyword id="KW-0067">ATP-binding</keyword>
<keyword id="KW-0378">Hydrolase</keyword>
<keyword id="KW-0496">Mitochondrion</keyword>
<keyword id="KW-0547">Nucleotide-binding</keyword>
<keyword id="KW-0645">Protease</keyword>
<keyword id="KW-1185">Reference proteome</keyword>
<keyword id="KW-0809">Transit peptide</keyword>
<accession>Q9FK07</accession>
<accession>O48566</accession>